<evidence type="ECO:0000255" key="1">
    <source>
        <dbReference type="HAMAP-Rule" id="MF_00818"/>
    </source>
</evidence>
<evidence type="ECO:0000256" key="2">
    <source>
        <dbReference type="SAM" id="MobiDB-lite"/>
    </source>
</evidence>
<evidence type="ECO:0000305" key="3"/>
<name>QUEF_RHIJ3</name>
<reference key="1">
    <citation type="journal article" date="2006" name="Genome Biol.">
        <title>The genome of Rhizobium leguminosarum has recognizable core and accessory components.</title>
        <authorList>
            <person name="Young J.P.W."/>
            <person name="Crossman L.C."/>
            <person name="Johnston A.W.B."/>
            <person name="Thomson N.R."/>
            <person name="Ghazoui Z.F."/>
            <person name="Hull K.H."/>
            <person name="Wexler M."/>
            <person name="Curson A.R.J."/>
            <person name="Todd J.D."/>
            <person name="Poole P.S."/>
            <person name="Mauchline T.H."/>
            <person name="East A.K."/>
            <person name="Quail M.A."/>
            <person name="Churcher C."/>
            <person name="Arrowsmith C."/>
            <person name="Cherevach I."/>
            <person name="Chillingworth T."/>
            <person name="Clarke K."/>
            <person name="Cronin A."/>
            <person name="Davis P."/>
            <person name="Fraser A."/>
            <person name="Hance Z."/>
            <person name="Hauser H."/>
            <person name="Jagels K."/>
            <person name="Moule S."/>
            <person name="Mungall K."/>
            <person name="Norbertczak H."/>
            <person name="Rabbinowitsch E."/>
            <person name="Sanders M."/>
            <person name="Simmonds M."/>
            <person name="Whitehead S."/>
            <person name="Parkhill J."/>
        </authorList>
    </citation>
    <scope>NUCLEOTIDE SEQUENCE [LARGE SCALE GENOMIC DNA]</scope>
    <source>
        <strain>DSM 114642 / LMG 32736 / 3841</strain>
    </source>
</reference>
<comment type="function">
    <text evidence="1">Catalyzes the NADPH-dependent reduction of 7-cyano-7-deazaguanine (preQ0) to 7-aminomethyl-7-deazaguanine (preQ1).</text>
</comment>
<comment type="catalytic activity">
    <reaction evidence="1">
        <text>7-aminomethyl-7-carbaguanine + 2 NADP(+) = 7-cyano-7-deazaguanine + 2 NADPH + 3 H(+)</text>
        <dbReference type="Rhea" id="RHEA:13409"/>
        <dbReference type="ChEBI" id="CHEBI:15378"/>
        <dbReference type="ChEBI" id="CHEBI:45075"/>
        <dbReference type="ChEBI" id="CHEBI:57783"/>
        <dbReference type="ChEBI" id="CHEBI:58349"/>
        <dbReference type="ChEBI" id="CHEBI:58703"/>
        <dbReference type="EC" id="1.7.1.13"/>
    </reaction>
</comment>
<comment type="pathway">
    <text evidence="1">tRNA modification; tRNA-queuosine biosynthesis.</text>
</comment>
<comment type="subcellular location">
    <subcellularLocation>
        <location evidence="1">Cytoplasm</location>
    </subcellularLocation>
</comment>
<comment type="similarity">
    <text evidence="1">Belongs to the GTP cyclohydrolase I family. QueF type 1 subfamily.</text>
</comment>
<comment type="sequence caution" evidence="3">
    <conflict type="erroneous initiation">
        <sequence resource="EMBL-CDS" id="CAK09005"/>
    </conflict>
</comment>
<proteinExistence type="inferred from homology"/>
<dbReference type="EC" id="1.7.1.13" evidence="1"/>
<dbReference type="EMBL" id="AM236080">
    <property type="protein sequence ID" value="CAK09005.1"/>
    <property type="status" value="ALT_INIT"/>
    <property type="molecule type" value="Genomic_DNA"/>
</dbReference>
<dbReference type="RefSeq" id="WP_003541825.1">
    <property type="nucleotide sequence ID" value="NC_008380.1"/>
</dbReference>
<dbReference type="SMR" id="Q1MDH2"/>
<dbReference type="EnsemblBacteria" id="CAK09005">
    <property type="protein sequence ID" value="CAK09005"/>
    <property type="gene ID" value="RL3517"/>
</dbReference>
<dbReference type="KEGG" id="rle:RL3517"/>
<dbReference type="eggNOG" id="COG0780">
    <property type="taxonomic scope" value="Bacteria"/>
</dbReference>
<dbReference type="HOGENOM" id="CLU_102489_0_1_5"/>
<dbReference type="UniPathway" id="UPA00392"/>
<dbReference type="Proteomes" id="UP000006575">
    <property type="component" value="Chromosome"/>
</dbReference>
<dbReference type="GO" id="GO:0005737">
    <property type="term" value="C:cytoplasm"/>
    <property type="evidence" value="ECO:0007669"/>
    <property type="project" value="UniProtKB-SubCell"/>
</dbReference>
<dbReference type="GO" id="GO:0033739">
    <property type="term" value="F:preQ1 synthase activity"/>
    <property type="evidence" value="ECO:0007669"/>
    <property type="project" value="UniProtKB-UniRule"/>
</dbReference>
<dbReference type="GO" id="GO:0008616">
    <property type="term" value="P:queuosine biosynthetic process"/>
    <property type="evidence" value="ECO:0007669"/>
    <property type="project" value="UniProtKB-UniRule"/>
</dbReference>
<dbReference type="GO" id="GO:0006400">
    <property type="term" value="P:tRNA modification"/>
    <property type="evidence" value="ECO:0007669"/>
    <property type="project" value="UniProtKB-UniRule"/>
</dbReference>
<dbReference type="Gene3D" id="3.30.1130.10">
    <property type="match status" value="1"/>
</dbReference>
<dbReference type="HAMAP" id="MF_00818">
    <property type="entry name" value="QueF_type1"/>
    <property type="match status" value="1"/>
</dbReference>
<dbReference type="InterPro" id="IPR043133">
    <property type="entry name" value="GTP-CH-I_C/QueF"/>
</dbReference>
<dbReference type="InterPro" id="IPR050084">
    <property type="entry name" value="NADPH_dep_7-cyano-7-deazaG_red"/>
</dbReference>
<dbReference type="InterPro" id="IPR029500">
    <property type="entry name" value="QueF"/>
</dbReference>
<dbReference type="InterPro" id="IPR016856">
    <property type="entry name" value="QueF_type1"/>
</dbReference>
<dbReference type="NCBIfam" id="TIGR03139">
    <property type="entry name" value="QueF-II"/>
    <property type="match status" value="1"/>
</dbReference>
<dbReference type="PANTHER" id="PTHR34354">
    <property type="entry name" value="NADPH-DEPENDENT 7-CYANO-7-DEAZAGUANINE REDUCTASE"/>
    <property type="match status" value="1"/>
</dbReference>
<dbReference type="PANTHER" id="PTHR34354:SF1">
    <property type="entry name" value="NADPH-DEPENDENT 7-CYANO-7-DEAZAGUANINE REDUCTASE"/>
    <property type="match status" value="1"/>
</dbReference>
<dbReference type="Pfam" id="PF14489">
    <property type="entry name" value="QueF"/>
    <property type="match status" value="1"/>
</dbReference>
<dbReference type="PIRSF" id="PIRSF027377">
    <property type="entry name" value="Nitrile_oxidored_QueF"/>
    <property type="match status" value="1"/>
</dbReference>
<dbReference type="SUPFAM" id="SSF55620">
    <property type="entry name" value="Tetrahydrobiopterin biosynthesis enzymes-like"/>
    <property type="match status" value="1"/>
</dbReference>
<accession>Q1MDH2</accession>
<feature type="chain" id="PRO_0000247691" description="NADPH-dependent 7-cyano-7-deazaguanine reductase">
    <location>
        <begin position="1"/>
        <end position="154"/>
    </location>
</feature>
<feature type="region of interest" description="Disordered" evidence="2">
    <location>
        <begin position="1"/>
        <end position="28"/>
    </location>
</feature>
<feature type="compositionally biased region" description="Polar residues" evidence="2">
    <location>
        <begin position="1"/>
        <end position="21"/>
    </location>
</feature>
<feature type="active site" description="Thioimide intermediate" evidence="1">
    <location>
        <position position="52"/>
    </location>
</feature>
<feature type="active site" description="Proton donor" evidence="1">
    <location>
        <position position="59"/>
    </location>
</feature>
<feature type="binding site" evidence="1">
    <location>
        <begin position="74"/>
        <end position="76"/>
    </location>
    <ligand>
        <name>substrate</name>
    </ligand>
</feature>
<feature type="binding site" evidence="1">
    <location>
        <begin position="93"/>
        <end position="94"/>
    </location>
    <ligand>
        <name>substrate</name>
    </ligand>
</feature>
<sequence length="154" mass="17363">MPNTDVSSLSMLGQQTETAQSPEEAVLEKVPSNHAGTDYVVRFTAPEFTSLCPMTGQPDFAHIVIDYIPGEWLVESKSLKLFLHSFRNHGAFHEDCSIYIAKRIVELLDPRWLRIGAYWYPRGGIPIDVFWQTGKPPEGVWLPEQGVATYRGRG</sequence>
<keyword id="KW-0963">Cytoplasm</keyword>
<keyword id="KW-0521">NADP</keyword>
<keyword id="KW-0560">Oxidoreductase</keyword>
<keyword id="KW-0671">Queuosine biosynthesis</keyword>
<protein>
    <recommendedName>
        <fullName evidence="1">NADPH-dependent 7-cyano-7-deazaguanine reductase</fullName>
        <ecNumber evidence="1">1.7.1.13</ecNumber>
    </recommendedName>
    <alternativeName>
        <fullName evidence="1">7-cyano-7-carbaguanine reductase</fullName>
    </alternativeName>
    <alternativeName>
        <fullName evidence="1">NADPH-dependent nitrile oxidoreductase</fullName>
    </alternativeName>
    <alternativeName>
        <fullName evidence="1">PreQ(0) reductase</fullName>
    </alternativeName>
</protein>
<gene>
    <name evidence="1" type="primary">queF</name>
    <name type="ordered locus">RL3517</name>
</gene>
<organism>
    <name type="scientific">Rhizobium johnstonii (strain DSM 114642 / LMG 32736 / 3841)</name>
    <name type="common">Rhizobium leguminosarum bv. viciae</name>
    <dbReference type="NCBI Taxonomy" id="216596"/>
    <lineage>
        <taxon>Bacteria</taxon>
        <taxon>Pseudomonadati</taxon>
        <taxon>Pseudomonadota</taxon>
        <taxon>Alphaproteobacteria</taxon>
        <taxon>Hyphomicrobiales</taxon>
        <taxon>Rhizobiaceae</taxon>
        <taxon>Rhizobium/Agrobacterium group</taxon>
        <taxon>Rhizobium</taxon>
        <taxon>Rhizobium johnstonii</taxon>
    </lineage>
</organism>